<feature type="peptide" id="PRO_0000250413" description="Tryptophyllin-T2-9" evidence="2">
    <location>
        <begin position="1"/>
        <end position="7"/>
    </location>
</feature>
<organism>
    <name type="scientific">Pithecopus azureus</name>
    <name type="common">Orange-legged monkey tree frog</name>
    <name type="synonym">Phyllomedusa azurea</name>
    <dbReference type="NCBI Taxonomy" id="2034991"/>
    <lineage>
        <taxon>Eukaryota</taxon>
        <taxon>Metazoa</taxon>
        <taxon>Chordata</taxon>
        <taxon>Craniata</taxon>
        <taxon>Vertebrata</taxon>
        <taxon>Euteleostomi</taxon>
        <taxon>Amphibia</taxon>
        <taxon>Batrachia</taxon>
        <taxon>Anura</taxon>
        <taxon>Neobatrachia</taxon>
        <taxon>Hyloidea</taxon>
        <taxon>Hylidae</taxon>
        <taxon>Phyllomedusinae</taxon>
        <taxon>Pithecopus</taxon>
    </lineage>
</organism>
<accession>P84944</accession>
<evidence type="ECO:0000255" key="1"/>
<evidence type="ECO:0000269" key="2">
    <source>
    </source>
</evidence>
<evidence type="ECO:0000303" key="3">
    <source>
    </source>
</evidence>
<evidence type="ECO:0000305" key="4"/>
<protein>
    <recommendedName>
        <fullName evidence="3">Tryptophyllin-T2-9</fullName>
        <shortName evidence="3">Pha-T2-9</shortName>
    </recommendedName>
    <alternativeName>
        <fullName evidence="3">Tryptophyllin-4</fullName>
    </alternativeName>
</protein>
<comment type="subcellular location">
    <subcellularLocation>
        <location evidence="2">Secreted</location>
    </subcellularLocation>
</comment>
<comment type="tissue specificity">
    <text evidence="2">Expressed by the skin glands.</text>
</comment>
<comment type="mass spectrometry" mass="814.4" method="MALDI" evidence="2"/>
<comment type="similarity">
    <text evidence="1">Belongs to the frog skin active peptide (FSAP) family. Tryptophillin subfamily.</text>
</comment>
<proteinExistence type="evidence at protein level"/>
<dbReference type="GO" id="GO:0005576">
    <property type="term" value="C:extracellular region"/>
    <property type="evidence" value="ECO:0007669"/>
    <property type="project" value="UniProtKB-SubCell"/>
</dbReference>
<dbReference type="GO" id="GO:0006952">
    <property type="term" value="P:defense response"/>
    <property type="evidence" value="ECO:0007669"/>
    <property type="project" value="UniProtKB-KW"/>
</dbReference>
<reference evidence="4" key="1">
    <citation type="journal article" date="2007" name="J. Proteome Res.">
        <title>Amphibian skin secretomics: application of parallel quadrupole time-of-flight mass spectrometry and peptide precursor cDNA cloning to rapidly characterize the skin secretory peptidome of Phyllomedusa hypochondrialis azurea: discovery of a novel peptide family, the hyposins.</title>
        <authorList>
            <person name="Thompson A.H."/>
            <person name="Bjourson A.J."/>
            <person name="Orr D.F."/>
            <person name="Shaw C."/>
            <person name="McClean S."/>
        </authorList>
    </citation>
    <scope>PROTEIN SEQUENCE</scope>
    <scope>SUBCELLULAR LOCATION</scope>
    <scope>TISSUE SPECIFICITY</scope>
    <scope>MASS SPECTROMETRY</scope>
    <source>
        <tissue evidence="2">Skin secretion</tissue>
    </source>
</reference>
<sequence length="7" mass="815">VPPIGWF</sequence>
<name>TY29_PITAZ</name>
<keyword id="KW-0878">Amphibian defense peptide</keyword>
<keyword id="KW-0903">Direct protein sequencing</keyword>
<keyword id="KW-0964">Secreted</keyword>